<proteinExistence type="inferred from homology"/>
<name>MNMC_BURM1</name>
<feature type="chain" id="PRO_0000347956" description="tRNA 5-methylaminomethyl-2-thiouridine biosynthesis bifunctional protein MnmC">
    <location>
        <begin position="1"/>
        <end position="657"/>
    </location>
</feature>
<feature type="region of interest" description="tRNA (mnm(5)s(2)U34)-methyltransferase">
    <location>
        <begin position="1"/>
        <end position="236"/>
    </location>
</feature>
<feature type="region of interest" description="FAD-dependent cmnm(5)s(2)U34 oxidoreductase">
    <location>
        <begin position="261"/>
        <end position="657"/>
    </location>
</feature>
<dbReference type="EC" id="2.1.1.61" evidence="1"/>
<dbReference type="EC" id="1.5.-.-" evidence="1"/>
<dbReference type="EMBL" id="CP000868">
    <property type="protein sequence ID" value="ABX13762.1"/>
    <property type="molecule type" value="Genomic_DNA"/>
</dbReference>
<dbReference type="EMBL" id="AP009385">
    <property type="protein sequence ID" value="BAG41988.1"/>
    <property type="molecule type" value="Genomic_DNA"/>
</dbReference>
<dbReference type="RefSeq" id="WP_012212457.1">
    <property type="nucleotide sequence ID" value="NC_010084.1"/>
</dbReference>
<dbReference type="SMR" id="A9AJC5"/>
<dbReference type="STRING" id="395019.BMULJ_00003"/>
<dbReference type="KEGG" id="bmj:BMULJ_00003"/>
<dbReference type="KEGG" id="bmu:Bmul_0067"/>
<dbReference type="eggNOG" id="COG0665">
    <property type="taxonomic scope" value="Bacteria"/>
</dbReference>
<dbReference type="eggNOG" id="COG4121">
    <property type="taxonomic scope" value="Bacteria"/>
</dbReference>
<dbReference type="HOGENOM" id="CLU_022427_1_0_4"/>
<dbReference type="Proteomes" id="UP000008815">
    <property type="component" value="Chromosome 1"/>
</dbReference>
<dbReference type="GO" id="GO:0005737">
    <property type="term" value="C:cytoplasm"/>
    <property type="evidence" value="ECO:0007669"/>
    <property type="project" value="UniProtKB-SubCell"/>
</dbReference>
<dbReference type="GO" id="GO:0050660">
    <property type="term" value="F:flavin adenine dinucleotide binding"/>
    <property type="evidence" value="ECO:0007669"/>
    <property type="project" value="UniProtKB-UniRule"/>
</dbReference>
<dbReference type="GO" id="GO:0016645">
    <property type="term" value="F:oxidoreductase activity, acting on the CH-NH group of donors"/>
    <property type="evidence" value="ECO:0007669"/>
    <property type="project" value="InterPro"/>
</dbReference>
<dbReference type="GO" id="GO:0004808">
    <property type="term" value="F:tRNA (5-methylaminomethyl-2-thiouridylate)(34)-methyltransferase activity"/>
    <property type="evidence" value="ECO:0007669"/>
    <property type="project" value="UniProtKB-EC"/>
</dbReference>
<dbReference type="GO" id="GO:0032259">
    <property type="term" value="P:methylation"/>
    <property type="evidence" value="ECO:0007669"/>
    <property type="project" value="UniProtKB-KW"/>
</dbReference>
<dbReference type="GO" id="GO:0002097">
    <property type="term" value="P:tRNA wobble base modification"/>
    <property type="evidence" value="ECO:0007669"/>
    <property type="project" value="UniProtKB-UniRule"/>
</dbReference>
<dbReference type="Gene3D" id="3.30.9.10">
    <property type="entry name" value="D-Amino Acid Oxidase, subunit A, domain 2"/>
    <property type="match status" value="1"/>
</dbReference>
<dbReference type="Gene3D" id="3.50.50.60">
    <property type="entry name" value="FAD/NAD(P)-binding domain"/>
    <property type="match status" value="1"/>
</dbReference>
<dbReference type="Gene3D" id="3.40.50.150">
    <property type="entry name" value="Vaccinia Virus protein VP39"/>
    <property type="match status" value="1"/>
</dbReference>
<dbReference type="HAMAP" id="MF_01102">
    <property type="entry name" value="MnmC"/>
    <property type="match status" value="1"/>
</dbReference>
<dbReference type="InterPro" id="IPR006076">
    <property type="entry name" value="FAD-dep_OxRdtase"/>
</dbReference>
<dbReference type="InterPro" id="IPR036188">
    <property type="entry name" value="FAD/NAD-bd_sf"/>
</dbReference>
<dbReference type="InterPro" id="IPR008471">
    <property type="entry name" value="MnmC-like_methylTransf"/>
</dbReference>
<dbReference type="InterPro" id="IPR029063">
    <property type="entry name" value="SAM-dependent_MTases_sf"/>
</dbReference>
<dbReference type="InterPro" id="IPR023032">
    <property type="entry name" value="tRNA_MAMT_biosynth_bifunc_MnmC"/>
</dbReference>
<dbReference type="InterPro" id="IPR047785">
    <property type="entry name" value="tRNA_MNMC2"/>
</dbReference>
<dbReference type="InterPro" id="IPR017610">
    <property type="entry name" value="tRNA_S-uridine_synth_MnmC_C"/>
</dbReference>
<dbReference type="NCBIfam" id="TIGR03197">
    <property type="entry name" value="MnmC_Cterm"/>
    <property type="match status" value="1"/>
</dbReference>
<dbReference type="NCBIfam" id="NF002481">
    <property type="entry name" value="PRK01747.1-2"/>
    <property type="match status" value="1"/>
</dbReference>
<dbReference type="NCBIfam" id="NF002483">
    <property type="entry name" value="PRK01747.1-4"/>
    <property type="match status" value="1"/>
</dbReference>
<dbReference type="NCBIfam" id="NF033855">
    <property type="entry name" value="tRNA_MNMC2"/>
    <property type="match status" value="1"/>
</dbReference>
<dbReference type="PANTHER" id="PTHR13847">
    <property type="entry name" value="SARCOSINE DEHYDROGENASE-RELATED"/>
    <property type="match status" value="1"/>
</dbReference>
<dbReference type="PANTHER" id="PTHR13847:SF283">
    <property type="entry name" value="TRNA 5-METHYLAMINOMETHYL-2-THIOURIDINE BIOSYNTHESIS BIFUNCTIONAL PROTEIN MNMC"/>
    <property type="match status" value="1"/>
</dbReference>
<dbReference type="Pfam" id="PF01266">
    <property type="entry name" value="DAO"/>
    <property type="match status" value="1"/>
</dbReference>
<dbReference type="Pfam" id="PF05430">
    <property type="entry name" value="Methyltransf_30"/>
    <property type="match status" value="1"/>
</dbReference>
<dbReference type="SUPFAM" id="SSF54373">
    <property type="entry name" value="FAD-linked reductases, C-terminal domain"/>
    <property type="match status" value="1"/>
</dbReference>
<dbReference type="SUPFAM" id="SSF51905">
    <property type="entry name" value="FAD/NAD(P)-binding domain"/>
    <property type="match status" value="1"/>
</dbReference>
<keyword id="KW-0963">Cytoplasm</keyword>
<keyword id="KW-0274">FAD</keyword>
<keyword id="KW-0285">Flavoprotein</keyword>
<keyword id="KW-0489">Methyltransferase</keyword>
<keyword id="KW-0511">Multifunctional enzyme</keyword>
<keyword id="KW-0560">Oxidoreductase</keyword>
<keyword id="KW-1185">Reference proteome</keyword>
<keyword id="KW-0949">S-adenosyl-L-methionine</keyword>
<keyword id="KW-0808">Transferase</keyword>
<keyword id="KW-0819">tRNA processing</keyword>
<sequence>MPDRLVPATLAFRDDGTLVSPAYGDIYHSAAGAIAQANHVFVAGNGLPARWQQRRTFTIVETGFGTGCNFLATWAAWRDDPARCERLHFVSVEKHPFSREDLRRAAAHIVANTTISASVDALADAWPPLVPGLHRLEFDAGRVVLTLVFGDALERLPTLVARADAFYLDGFAPSKNADLWSIDVFRALARMADEHATFATYSSSGVVKRALDEAGFAYRKVDGFAGKRAMLVGEYAPRWRMRRHEPPRAWPNAAARRALVIGAGVAGCAVVERLAARGWNVTLIERHERIASEASGNPAGVFHPLMTRDDNVASRLTRAGFLYALARWRALEAGGHAFARSTHGMVHLAESADDFARMRDAFDALGAPSDYARLLDTDAARAYLNLPVAHGGLLFPHGGAVWPAALADAQCAAAGDRVQRLTRTEVARLERNGDEWHALDAHGRTLAQAPVVVLANAGDAVRLAGLRHVALQPVRGQLTLLPAASASPPPCPAIGDGYAVPLDDGTLLIGATFEPDDVDPAIRVAGHAENLERVRRLLPGLIGDVPALDTLRGRVAFRWVAGDRLPLIGPLADEAQAVANARALSGAKARDLPRMPGLYGAFGYGSRGLVWAALGAELIASQLDGEPWPIERELAEAVDPARFLIRALRARQVSAAD</sequence>
<comment type="function">
    <text evidence="1">Catalyzes the last two steps in the biosynthesis of 5-methylaminomethyl-2-thiouridine (mnm(5)s(2)U) at the wobble position (U34) in tRNA. Catalyzes the FAD-dependent demodification of cmnm(5)s(2)U34 to nm(5)s(2)U34, followed by the transfer of a methyl group from S-adenosyl-L-methionine to nm(5)s(2)U34, to form mnm(5)s(2)U34.</text>
</comment>
<comment type="catalytic activity">
    <reaction evidence="1">
        <text>5-aminomethyl-2-thiouridine(34) in tRNA + S-adenosyl-L-methionine = 5-methylaminomethyl-2-thiouridine(34) in tRNA + S-adenosyl-L-homocysteine + H(+)</text>
        <dbReference type="Rhea" id="RHEA:19569"/>
        <dbReference type="Rhea" id="RHEA-COMP:10195"/>
        <dbReference type="Rhea" id="RHEA-COMP:10197"/>
        <dbReference type="ChEBI" id="CHEBI:15378"/>
        <dbReference type="ChEBI" id="CHEBI:57856"/>
        <dbReference type="ChEBI" id="CHEBI:59789"/>
        <dbReference type="ChEBI" id="CHEBI:74454"/>
        <dbReference type="ChEBI" id="CHEBI:74455"/>
        <dbReference type="EC" id="2.1.1.61"/>
    </reaction>
</comment>
<comment type="cofactor">
    <cofactor evidence="1">
        <name>FAD</name>
        <dbReference type="ChEBI" id="CHEBI:57692"/>
    </cofactor>
</comment>
<comment type="subcellular location">
    <subcellularLocation>
        <location evidence="1">Cytoplasm</location>
    </subcellularLocation>
</comment>
<comment type="similarity">
    <text evidence="1">In the N-terminal section; belongs to the methyltransferase superfamily. tRNA (mnm(5)s(2)U34)-methyltransferase family.</text>
</comment>
<comment type="similarity">
    <text evidence="1">In the C-terminal section; belongs to the DAO family.</text>
</comment>
<organism>
    <name type="scientific">Burkholderia multivorans (strain ATCC 17616 / 249)</name>
    <dbReference type="NCBI Taxonomy" id="395019"/>
    <lineage>
        <taxon>Bacteria</taxon>
        <taxon>Pseudomonadati</taxon>
        <taxon>Pseudomonadota</taxon>
        <taxon>Betaproteobacteria</taxon>
        <taxon>Burkholderiales</taxon>
        <taxon>Burkholderiaceae</taxon>
        <taxon>Burkholderia</taxon>
        <taxon>Burkholderia cepacia complex</taxon>
    </lineage>
</organism>
<reference key="1">
    <citation type="submission" date="2007-10" db="EMBL/GenBank/DDBJ databases">
        <title>Complete sequence of chromosome 1 of Burkholderia multivorans ATCC 17616.</title>
        <authorList>
            <person name="Copeland A."/>
            <person name="Lucas S."/>
            <person name="Lapidus A."/>
            <person name="Barry K."/>
            <person name="Glavina del Rio T."/>
            <person name="Dalin E."/>
            <person name="Tice H."/>
            <person name="Pitluck S."/>
            <person name="Chain P."/>
            <person name="Malfatti S."/>
            <person name="Shin M."/>
            <person name="Vergez L."/>
            <person name="Schmutz J."/>
            <person name="Larimer F."/>
            <person name="Land M."/>
            <person name="Hauser L."/>
            <person name="Kyrpides N."/>
            <person name="Kim E."/>
            <person name="Tiedje J."/>
            <person name="Richardson P."/>
        </authorList>
    </citation>
    <scope>NUCLEOTIDE SEQUENCE [LARGE SCALE GENOMIC DNA]</scope>
    <source>
        <strain>ATCC 17616 / 249</strain>
    </source>
</reference>
<reference key="2">
    <citation type="submission" date="2007-04" db="EMBL/GenBank/DDBJ databases">
        <title>Complete genome sequence of Burkholderia multivorans ATCC 17616.</title>
        <authorList>
            <person name="Ohtsubo Y."/>
            <person name="Yamashita A."/>
            <person name="Kurokawa K."/>
            <person name="Takami H."/>
            <person name="Yuhara S."/>
            <person name="Nishiyama E."/>
            <person name="Endo R."/>
            <person name="Miyazaki R."/>
            <person name="Ono A."/>
            <person name="Yano K."/>
            <person name="Ito M."/>
            <person name="Sota M."/>
            <person name="Yuji N."/>
            <person name="Hattori M."/>
            <person name="Tsuda M."/>
        </authorList>
    </citation>
    <scope>NUCLEOTIDE SEQUENCE [LARGE SCALE GENOMIC DNA]</scope>
    <source>
        <strain>ATCC 17616 / 249</strain>
    </source>
</reference>
<gene>
    <name evidence="1" type="primary">mnmC</name>
    <name type="ordered locus">Bmul_0067</name>
    <name type="ordered locus">BMULJ_00003</name>
</gene>
<protein>
    <recommendedName>
        <fullName evidence="1">tRNA 5-methylaminomethyl-2-thiouridine biosynthesis bifunctional protein MnmC</fullName>
        <shortName evidence="1">tRNA mnm(5)s(2)U biosynthesis bifunctional protein</shortName>
    </recommendedName>
    <domain>
        <recommendedName>
            <fullName evidence="1">tRNA (mnm(5)s(2)U34)-methyltransferase</fullName>
            <ecNumber evidence="1">2.1.1.61</ecNumber>
        </recommendedName>
    </domain>
    <domain>
        <recommendedName>
            <fullName evidence="1">FAD-dependent cmnm(5)s(2)U34 oxidoreductase</fullName>
            <ecNumber evidence="1">1.5.-.-</ecNumber>
        </recommendedName>
    </domain>
</protein>
<evidence type="ECO:0000255" key="1">
    <source>
        <dbReference type="HAMAP-Rule" id="MF_01102"/>
    </source>
</evidence>
<accession>A9AJC5</accession>